<name>ATPH_ACOCI</name>
<evidence type="ECO:0000255" key="1">
    <source>
        <dbReference type="HAMAP-Rule" id="MF_01396"/>
    </source>
</evidence>
<organism>
    <name type="scientific">Acorus calamus var. americanus</name>
    <name type="common">American sweet flag</name>
    <name type="synonym">Acorus americanus</name>
    <dbReference type="NCBI Taxonomy" id="263995"/>
    <lineage>
        <taxon>Eukaryota</taxon>
        <taxon>Viridiplantae</taxon>
        <taxon>Streptophyta</taxon>
        <taxon>Embryophyta</taxon>
        <taxon>Tracheophyta</taxon>
        <taxon>Spermatophyta</taxon>
        <taxon>Magnoliopsida</taxon>
        <taxon>Liliopsida</taxon>
        <taxon>Acoraceae</taxon>
        <taxon>Acorus</taxon>
    </lineage>
</organism>
<geneLocation type="chloroplast"/>
<feature type="chain" id="PRO_0000362879" description="ATP synthase subunit c, chloroplastic">
    <location>
        <begin position="1"/>
        <end position="81"/>
    </location>
</feature>
<feature type="transmembrane region" description="Helical" evidence="1">
    <location>
        <begin position="3"/>
        <end position="23"/>
    </location>
</feature>
<feature type="transmembrane region" description="Helical" evidence="1">
    <location>
        <begin position="57"/>
        <end position="77"/>
    </location>
</feature>
<feature type="site" description="Reversibly protonated during proton transport" evidence="1">
    <location>
        <position position="61"/>
    </location>
</feature>
<dbReference type="EMBL" id="DQ069379">
    <property type="protein sequence ID" value="AAZ03823.1"/>
    <property type="molecule type" value="Genomic_DNA"/>
</dbReference>
<dbReference type="EMBL" id="EU273602">
    <property type="protein sequence ID" value="ABX38731.1"/>
    <property type="molecule type" value="Genomic_DNA"/>
</dbReference>
<dbReference type="RefSeq" id="YP_001586169.1">
    <property type="nucleotide sequence ID" value="NC_010093.1"/>
</dbReference>
<dbReference type="SMR" id="Q4FGF2"/>
<dbReference type="GeneID" id="5777707"/>
<dbReference type="GO" id="GO:0009535">
    <property type="term" value="C:chloroplast thylakoid membrane"/>
    <property type="evidence" value="ECO:0007669"/>
    <property type="project" value="UniProtKB-SubCell"/>
</dbReference>
<dbReference type="GO" id="GO:0045259">
    <property type="term" value="C:proton-transporting ATP synthase complex"/>
    <property type="evidence" value="ECO:0007669"/>
    <property type="project" value="UniProtKB-KW"/>
</dbReference>
<dbReference type="GO" id="GO:0033177">
    <property type="term" value="C:proton-transporting two-sector ATPase complex, proton-transporting domain"/>
    <property type="evidence" value="ECO:0007669"/>
    <property type="project" value="InterPro"/>
</dbReference>
<dbReference type="GO" id="GO:0008289">
    <property type="term" value="F:lipid binding"/>
    <property type="evidence" value="ECO:0007669"/>
    <property type="project" value="UniProtKB-KW"/>
</dbReference>
<dbReference type="GO" id="GO:0046933">
    <property type="term" value="F:proton-transporting ATP synthase activity, rotational mechanism"/>
    <property type="evidence" value="ECO:0007669"/>
    <property type="project" value="UniProtKB-UniRule"/>
</dbReference>
<dbReference type="CDD" id="cd18183">
    <property type="entry name" value="ATP-synt_Fo_c_ATPH"/>
    <property type="match status" value="1"/>
</dbReference>
<dbReference type="FunFam" id="1.20.20.10:FF:000001">
    <property type="entry name" value="ATP synthase subunit c, chloroplastic"/>
    <property type="match status" value="1"/>
</dbReference>
<dbReference type="Gene3D" id="1.20.20.10">
    <property type="entry name" value="F1F0 ATP synthase subunit C"/>
    <property type="match status" value="1"/>
</dbReference>
<dbReference type="HAMAP" id="MF_01396">
    <property type="entry name" value="ATP_synth_c_bact"/>
    <property type="match status" value="1"/>
</dbReference>
<dbReference type="InterPro" id="IPR005953">
    <property type="entry name" value="ATP_synth_csu_bac/chlpt"/>
</dbReference>
<dbReference type="InterPro" id="IPR000454">
    <property type="entry name" value="ATP_synth_F0_csu"/>
</dbReference>
<dbReference type="InterPro" id="IPR020537">
    <property type="entry name" value="ATP_synth_F0_csu_DDCD_BS"/>
</dbReference>
<dbReference type="InterPro" id="IPR038662">
    <property type="entry name" value="ATP_synth_F0_csu_sf"/>
</dbReference>
<dbReference type="InterPro" id="IPR002379">
    <property type="entry name" value="ATPase_proteolipid_c-like_dom"/>
</dbReference>
<dbReference type="InterPro" id="IPR035921">
    <property type="entry name" value="F/V-ATP_Csub_sf"/>
</dbReference>
<dbReference type="NCBIfam" id="TIGR01260">
    <property type="entry name" value="ATP_synt_c"/>
    <property type="match status" value="1"/>
</dbReference>
<dbReference type="NCBIfam" id="NF005608">
    <property type="entry name" value="PRK07354.1"/>
    <property type="match status" value="1"/>
</dbReference>
<dbReference type="PANTHER" id="PTHR10031">
    <property type="entry name" value="ATP SYNTHASE LIPID-BINDING PROTEIN, MITOCHONDRIAL"/>
    <property type="match status" value="1"/>
</dbReference>
<dbReference type="PANTHER" id="PTHR10031:SF0">
    <property type="entry name" value="ATPASE PROTEIN 9"/>
    <property type="match status" value="1"/>
</dbReference>
<dbReference type="Pfam" id="PF00137">
    <property type="entry name" value="ATP-synt_C"/>
    <property type="match status" value="1"/>
</dbReference>
<dbReference type="PRINTS" id="PR00124">
    <property type="entry name" value="ATPASEC"/>
</dbReference>
<dbReference type="SUPFAM" id="SSF81333">
    <property type="entry name" value="F1F0 ATP synthase subunit C"/>
    <property type="match status" value="1"/>
</dbReference>
<dbReference type="PROSITE" id="PS00605">
    <property type="entry name" value="ATPASE_C"/>
    <property type="match status" value="1"/>
</dbReference>
<accession>Q4FGF2</accession>
<keyword id="KW-0066">ATP synthesis</keyword>
<keyword id="KW-0138">CF(0)</keyword>
<keyword id="KW-0150">Chloroplast</keyword>
<keyword id="KW-0375">Hydrogen ion transport</keyword>
<keyword id="KW-0406">Ion transport</keyword>
<keyword id="KW-0446">Lipid-binding</keyword>
<keyword id="KW-0472">Membrane</keyword>
<keyword id="KW-0934">Plastid</keyword>
<keyword id="KW-0793">Thylakoid</keyword>
<keyword id="KW-0812">Transmembrane</keyword>
<keyword id="KW-1133">Transmembrane helix</keyword>
<keyword id="KW-0813">Transport</keyword>
<protein>
    <recommendedName>
        <fullName evidence="1">ATP synthase subunit c, chloroplastic</fullName>
    </recommendedName>
    <alternativeName>
        <fullName evidence="1">ATP synthase F(0) sector subunit c</fullName>
    </alternativeName>
    <alternativeName>
        <fullName evidence="1">ATPase subunit III</fullName>
    </alternativeName>
    <alternativeName>
        <fullName evidence="1">F-type ATPase subunit c</fullName>
        <shortName evidence="1">F-ATPase subunit c</shortName>
    </alternativeName>
    <alternativeName>
        <fullName evidence="1">Lipid-binding protein</fullName>
    </alternativeName>
</protein>
<gene>
    <name evidence="1" type="primary">atpH</name>
</gene>
<proteinExistence type="inferred from homology"/>
<sequence length="81" mass="7990">MNPLISAASVIAAGLAVGLASIGPGVGQGTAAGQAVEGIARQPEAEGKIRGTLLLSLAFMEALTIYGLVVALALLFANPFV</sequence>
<reference key="1">
    <citation type="journal article" date="2005" name="Mol. Biol. Evol.">
        <title>Identifying the basal angiosperm node in chloroplast genome phylogenies: sampling one's way out of the Felsenstein zone.</title>
        <authorList>
            <person name="Leebens-Mack J."/>
            <person name="Raubeson L.A."/>
            <person name="Cui L."/>
            <person name="Kuehl J.V."/>
            <person name="Fourcade M.H."/>
            <person name="Chumley T.W."/>
            <person name="Boore J.L."/>
            <person name="Jansen R.K."/>
            <person name="dePamphilis C.W."/>
        </authorList>
    </citation>
    <scope>NUCLEOTIDE SEQUENCE [GENOMIC DNA]</scope>
</reference>
<reference key="2">
    <citation type="submission" date="2007-11" db="EMBL/GenBank/DDBJ databases">
        <title>The complete chloroplast genome of Acorus americanus.</title>
        <authorList>
            <person name="Peery R.M."/>
            <person name="Chumley T.W."/>
            <person name="Kuehl J.V."/>
            <person name="Boore J.L."/>
            <person name="Raubeson L.A."/>
        </authorList>
    </citation>
    <scope>NUCLEOTIDE SEQUENCE [LARGE SCALE GENOMIC DNA]</scope>
</reference>
<comment type="function">
    <text evidence="1">F(1)F(0) ATP synthase produces ATP from ADP in the presence of a proton or sodium gradient. F-type ATPases consist of two structural domains, F(1) containing the extramembraneous catalytic core and F(0) containing the membrane proton channel, linked together by a central stalk and a peripheral stalk. During catalysis, ATP synthesis in the catalytic domain of F(1) is coupled via a rotary mechanism of the central stalk subunits to proton translocation.</text>
</comment>
<comment type="function">
    <text evidence="1">Key component of the F(0) channel; it plays a direct role in translocation across the membrane. A homomeric c-ring of between 10-14 subunits forms the central stalk rotor element with the F(1) delta and epsilon subunits.</text>
</comment>
<comment type="subunit">
    <text evidence="1">F-type ATPases have 2 components, F(1) - the catalytic core - and F(0) - the membrane proton channel. F(1) has five subunits: alpha(3), beta(3), gamma(1), delta(1), epsilon(1). F(0) has four main subunits: a(1), b(1), b'(1) and c(10-14). The alpha and beta chains form an alternating ring which encloses part of the gamma chain. F(1) is attached to F(0) by a central stalk formed by the gamma and epsilon chains, while a peripheral stalk is formed by the delta, b and b' chains.</text>
</comment>
<comment type="subcellular location">
    <subcellularLocation>
        <location evidence="1">Plastid</location>
        <location evidence="1">Chloroplast thylakoid membrane</location>
        <topology evidence="1">Multi-pass membrane protein</topology>
    </subcellularLocation>
</comment>
<comment type="miscellaneous">
    <text>In plastids the F-type ATPase is also known as CF(1)CF(0).</text>
</comment>
<comment type="similarity">
    <text evidence="1">Belongs to the ATPase C chain family.</text>
</comment>